<reference key="1">
    <citation type="journal article" date="2005" name="Plant Physiol.">
        <title>Functional analysis of the RING-type ubiquitin ligase family of Arabidopsis.</title>
        <authorList>
            <person name="Stone S.L."/>
            <person name="Hauksdottir H."/>
            <person name="Troy A."/>
            <person name="Herschleb J."/>
            <person name="Kraft E."/>
            <person name="Callis J."/>
        </authorList>
    </citation>
    <scope>NUCLEOTIDE SEQUENCE [MRNA]</scope>
    <scope>FUNCTION</scope>
    <scope>CATALYTIC ACTIVITY</scope>
    <source>
        <strain>cv. Columbia</strain>
        <tissue>Leaf</tissue>
    </source>
</reference>
<reference key="2">
    <citation type="journal article" date="2000" name="Nature">
        <title>Sequence and analysis of chromosome 1 of the plant Arabidopsis thaliana.</title>
        <authorList>
            <person name="Theologis A."/>
            <person name="Ecker J.R."/>
            <person name="Palm C.J."/>
            <person name="Federspiel N.A."/>
            <person name="Kaul S."/>
            <person name="White O."/>
            <person name="Alonso J."/>
            <person name="Altafi H."/>
            <person name="Araujo R."/>
            <person name="Bowman C.L."/>
            <person name="Brooks S.Y."/>
            <person name="Buehler E."/>
            <person name="Chan A."/>
            <person name="Chao Q."/>
            <person name="Chen H."/>
            <person name="Cheuk R.F."/>
            <person name="Chin C.W."/>
            <person name="Chung M.K."/>
            <person name="Conn L."/>
            <person name="Conway A.B."/>
            <person name="Conway A.R."/>
            <person name="Creasy T.H."/>
            <person name="Dewar K."/>
            <person name="Dunn P."/>
            <person name="Etgu P."/>
            <person name="Feldblyum T.V."/>
            <person name="Feng J.-D."/>
            <person name="Fong B."/>
            <person name="Fujii C.Y."/>
            <person name="Gill J.E."/>
            <person name="Goldsmith A.D."/>
            <person name="Haas B."/>
            <person name="Hansen N.F."/>
            <person name="Hughes B."/>
            <person name="Huizar L."/>
            <person name="Hunter J.L."/>
            <person name="Jenkins J."/>
            <person name="Johnson-Hopson C."/>
            <person name="Khan S."/>
            <person name="Khaykin E."/>
            <person name="Kim C.J."/>
            <person name="Koo H.L."/>
            <person name="Kremenetskaia I."/>
            <person name="Kurtz D.B."/>
            <person name="Kwan A."/>
            <person name="Lam B."/>
            <person name="Langin-Hooper S."/>
            <person name="Lee A."/>
            <person name="Lee J.M."/>
            <person name="Lenz C.A."/>
            <person name="Li J.H."/>
            <person name="Li Y.-P."/>
            <person name="Lin X."/>
            <person name="Liu S.X."/>
            <person name="Liu Z.A."/>
            <person name="Luros J.S."/>
            <person name="Maiti R."/>
            <person name="Marziali A."/>
            <person name="Militscher J."/>
            <person name="Miranda M."/>
            <person name="Nguyen M."/>
            <person name="Nierman W.C."/>
            <person name="Osborne B.I."/>
            <person name="Pai G."/>
            <person name="Peterson J."/>
            <person name="Pham P.K."/>
            <person name="Rizzo M."/>
            <person name="Rooney T."/>
            <person name="Rowley D."/>
            <person name="Sakano H."/>
            <person name="Salzberg S.L."/>
            <person name="Schwartz J.R."/>
            <person name="Shinn P."/>
            <person name="Southwick A.M."/>
            <person name="Sun H."/>
            <person name="Tallon L.J."/>
            <person name="Tambunga G."/>
            <person name="Toriumi M.J."/>
            <person name="Town C.D."/>
            <person name="Utterback T."/>
            <person name="Van Aken S."/>
            <person name="Vaysberg M."/>
            <person name="Vysotskaia V.S."/>
            <person name="Walker M."/>
            <person name="Wu D."/>
            <person name="Yu G."/>
            <person name="Fraser C.M."/>
            <person name="Venter J.C."/>
            <person name="Davis R.W."/>
        </authorList>
    </citation>
    <scope>NUCLEOTIDE SEQUENCE [LARGE SCALE GENOMIC DNA]</scope>
    <source>
        <strain>cv. Columbia</strain>
    </source>
</reference>
<reference key="3">
    <citation type="journal article" date="2017" name="Plant J.">
        <title>Araport11: a complete reannotation of the Arabidopsis thaliana reference genome.</title>
        <authorList>
            <person name="Cheng C.Y."/>
            <person name="Krishnakumar V."/>
            <person name="Chan A.P."/>
            <person name="Thibaud-Nissen F."/>
            <person name="Schobel S."/>
            <person name="Town C.D."/>
        </authorList>
    </citation>
    <scope>GENOME REANNOTATION</scope>
    <source>
        <strain>cv. Columbia</strain>
    </source>
</reference>
<reference key="4">
    <citation type="submission" date="2004-04" db="EMBL/GenBank/DDBJ databases">
        <title>Arabidopsis ORF clones.</title>
        <authorList>
            <person name="Kim C.J."/>
            <person name="Chen H."/>
            <person name="Cheuk R.F."/>
            <person name="Shinn P."/>
            <person name="Ecker J.R."/>
        </authorList>
    </citation>
    <scope>NUCLEOTIDE SEQUENCE [LARGE SCALE MRNA]</scope>
    <source>
        <strain>cv. Columbia</strain>
    </source>
</reference>
<reference key="5">
    <citation type="submission" date="2006-07" db="EMBL/GenBank/DDBJ databases">
        <title>Large-scale analysis of RIKEN Arabidopsis full-length (RAFL) cDNAs.</title>
        <authorList>
            <person name="Totoki Y."/>
            <person name="Seki M."/>
            <person name="Ishida J."/>
            <person name="Nakajima M."/>
            <person name="Enju A."/>
            <person name="Kamiya A."/>
            <person name="Narusaka M."/>
            <person name="Shin-i T."/>
            <person name="Nakagawa M."/>
            <person name="Sakamoto N."/>
            <person name="Oishi K."/>
            <person name="Kohara Y."/>
            <person name="Kobayashi M."/>
            <person name="Toyoda A."/>
            <person name="Sakaki Y."/>
            <person name="Sakurai T."/>
            <person name="Iida K."/>
            <person name="Akiyama K."/>
            <person name="Satou M."/>
            <person name="Toyoda T."/>
            <person name="Konagaya A."/>
            <person name="Carninci P."/>
            <person name="Kawai J."/>
            <person name="Hayashizaki Y."/>
            <person name="Shinozaki K."/>
        </authorList>
    </citation>
    <scope>NUCLEOTIDE SEQUENCE [LARGE SCALE MRNA]</scope>
    <source>
        <strain>cv. Columbia</strain>
    </source>
</reference>
<reference key="6">
    <citation type="journal article" date="2002" name="Genome Biol.">
        <title>Evaluation and classification of RING-finger domains encoded by the Arabidopsis genome.</title>
        <authorList>
            <person name="Kosarev P."/>
            <person name="Mayer K.F.X."/>
            <person name="Hardtke C.S."/>
        </authorList>
    </citation>
    <scope>GENE FAMILY ORGANIZATION</scope>
</reference>
<reference key="7">
    <citation type="journal article" date="2004" name="Genetics">
        <title>Isolation and gene expression analysis of Arabidopsis thaliana mutants with constitutive expression of ATL2, an early elicitor-response RING-H2 zinc-finger gene.</title>
        <authorList>
            <person name="Serrano M."/>
            <person name="Guzman P."/>
        </authorList>
    </citation>
    <scope>IDENTIFICATION</scope>
</reference>
<reference key="8">
    <citation type="journal article" date="2005" name="Plant Physiol.">
        <title>Genome analysis and functional characterization of the E2 and RING-type E3 ligase ubiquitination enzymes of Arabidopsis.</title>
        <authorList>
            <person name="Kraft E."/>
            <person name="Stone S.L."/>
            <person name="Ma L."/>
            <person name="Su N."/>
            <person name="Gao Y."/>
            <person name="Lau O.-S."/>
            <person name="Deng X.-W."/>
            <person name="Callis J."/>
        </authorList>
    </citation>
    <scope>FUNCTION</scope>
    <scope>CATALYTIC ACTIVITY</scope>
</reference>
<reference key="9">
    <citation type="journal article" date="2006" name="J. Mol. Evol.">
        <title>The ATL gene family from Arabidopsis thaliana and Oryza sativa comprises a large number of putative ubiquitin ligases of the RING-H2 type.</title>
        <authorList>
            <person name="Serrano M."/>
            <person name="Parra S."/>
            <person name="Alcaraz L.D."/>
            <person name="Guzman P."/>
        </authorList>
    </citation>
    <scope>NOMENCLATURE</scope>
    <scope>GENE FAMILY ORGANIZATION</scope>
</reference>
<keyword id="KW-0472">Membrane</keyword>
<keyword id="KW-0479">Metal-binding</keyword>
<keyword id="KW-1185">Reference proteome</keyword>
<keyword id="KW-0732">Signal</keyword>
<keyword id="KW-0808">Transferase</keyword>
<keyword id="KW-0812">Transmembrane</keyword>
<keyword id="KW-1133">Transmembrane helix</keyword>
<keyword id="KW-0833">Ubl conjugation pathway</keyword>
<keyword id="KW-0862">Zinc</keyword>
<keyword id="KW-0863">Zinc-finger</keyword>
<accession>Q9SK92</accession>
<accession>Q4TU37</accession>
<name>ATL15_ARATH</name>
<evidence type="ECO:0000250" key="1"/>
<evidence type="ECO:0000255" key="2"/>
<evidence type="ECO:0000255" key="3">
    <source>
        <dbReference type="PROSITE-ProRule" id="PRU00175"/>
    </source>
</evidence>
<evidence type="ECO:0000269" key="4">
    <source>
    </source>
</evidence>
<evidence type="ECO:0000269" key="5">
    <source>
    </source>
</evidence>
<evidence type="ECO:0000305" key="6"/>
<feature type="signal peptide" evidence="2">
    <location>
        <begin position="1"/>
        <end position="23"/>
    </location>
</feature>
<feature type="chain" id="PRO_0000030701" description="E3 ubiquitin-protein ligase ATL15">
    <location>
        <begin position="24"/>
        <end position="381"/>
    </location>
</feature>
<feature type="transmembrane region" description="Helical" evidence="2">
    <location>
        <begin position="40"/>
        <end position="60"/>
    </location>
</feature>
<feature type="zinc finger region" description="RING-type; atypical" evidence="3">
    <location>
        <begin position="118"/>
        <end position="160"/>
    </location>
</feature>
<sequence length="381" mass="42226">MVVMSRVSFYSSFLLLLLEVVVASSEFDDEGRTSFSPTTAIIMIVLVSVFFALGCISVYMRRCLQHALGMDSGGGPGNWLNVRQTTEPGLDASVIETFPTFPYSTVKTLRIGKEALECPVCLNEFEDDETLRLIPQCCHVFHPGCIDAWLRSQTTCPLCRANLVPVPGESVSSEIPGLARETGQNSLRTPIDDNRKRVLTSPDERLIDSVAWTGNQSMPRKSMSTGWKLAELYSPASSPGQPEENLDRYTLRLPQEIHDQLVNSSLGKQGSKGQLALPQERSSVRGFRTGSLGTEKNYFYFERFDQDGRLDRRPFSITPPYHTRSIQSPDEIINASGNYQDRAGAPKGLLLAIRSPFDRLFTGKKNAGERSYLQSGDASPV</sequence>
<protein>
    <recommendedName>
        <fullName>E3 ubiquitin-protein ligase ATL15</fullName>
        <ecNumber evidence="4 5">2.3.2.27</ecNumber>
    </recommendedName>
    <alternativeName>
        <fullName>RING-H2 finger protein ATL15</fullName>
    </alternativeName>
    <alternativeName>
        <fullName evidence="6">RING-type E3 ubiquitin transferase ATL15</fullName>
    </alternativeName>
</protein>
<organism>
    <name type="scientific">Arabidopsis thaliana</name>
    <name type="common">Mouse-ear cress</name>
    <dbReference type="NCBI Taxonomy" id="3702"/>
    <lineage>
        <taxon>Eukaryota</taxon>
        <taxon>Viridiplantae</taxon>
        <taxon>Streptophyta</taxon>
        <taxon>Embryophyta</taxon>
        <taxon>Tracheophyta</taxon>
        <taxon>Spermatophyta</taxon>
        <taxon>Magnoliopsida</taxon>
        <taxon>eudicotyledons</taxon>
        <taxon>Gunneridae</taxon>
        <taxon>Pentapetalae</taxon>
        <taxon>rosids</taxon>
        <taxon>malvids</taxon>
        <taxon>Brassicales</taxon>
        <taxon>Brassicaceae</taxon>
        <taxon>Camelineae</taxon>
        <taxon>Arabidopsis</taxon>
    </lineage>
</organism>
<proteinExistence type="evidence at protein level"/>
<gene>
    <name type="primary">ATL15</name>
    <name type="ordered locus">At1g22500</name>
    <name type="ORF">F12K8.15</name>
</gene>
<comment type="function">
    <text evidence="4 5">E3 ubiquitin-protein ligase able to catalyze polyubiquitination with ubiquitin-conjugating enzyme E2 UBC8, UBC10, UBC11, UBC28 and UBC29 in vitro.</text>
</comment>
<comment type="catalytic activity">
    <reaction evidence="4 5">
        <text>S-ubiquitinyl-[E2 ubiquitin-conjugating enzyme]-L-cysteine + [acceptor protein]-L-lysine = [E2 ubiquitin-conjugating enzyme]-L-cysteine + N(6)-ubiquitinyl-[acceptor protein]-L-lysine.</text>
        <dbReference type="EC" id="2.3.2.27"/>
    </reaction>
</comment>
<comment type="pathway">
    <text>Protein modification; protein ubiquitination.</text>
</comment>
<comment type="subcellular location">
    <subcellularLocation>
        <location evidence="6">Membrane</location>
        <topology evidence="6">Single-pass membrane protein</topology>
    </subcellularLocation>
</comment>
<comment type="domain">
    <text evidence="1">The RING-type zinc finger domain mediates binding to an E2 ubiquitin-conjugating enzyme.</text>
</comment>
<comment type="similarity">
    <text evidence="6">Belongs to the RING-type zinc finger family. ATL subfamily.</text>
</comment>
<dbReference type="EC" id="2.3.2.27" evidence="4 5"/>
<dbReference type="EMBL" id="DQ059099">
    <property type="protein sequence ID" value="AAY57585.1"/>
    <property type="molecule type" value="mRNA"/>
</dbReference>
<dbReference type="EMBL" id="AC006551">
    <property type="protein sequence ID" value="AAF18526.1"/>
    <property type="molecule type" value="Genomic_DNA"/>
</dbReference>
<dbReference type="EMBL" id="CP002684">
    <property type="protein sequence ID" value="AEE30248.1"/>
    <property type="molecule type" value="Genomic_DNA"/>
</dbReference>
<dbReference type="EMBL" id="BT011235">
    <property type="protein sequence ID" value="AAR92271.1"/>
    <property type="molecule type" value="mRNA"/>
</dbReference>
<dbReference type="EMBL" id="BT012542">
    <property type="protein sequence ID" value="AAS99686.1"/>
    <property type="molecule type" value="mRNA"/>
</dbReference>
<dbReference type="EMBL" id="AK226235">
    <property type="protein sequence ID" value="BAE98398.1"/>
    <property type="molecule type" value="mRNA"/>
</dbReference>
<dbReference type="PIR" id="C86358">
    <property type="entry name" value="C86358"/>
</dbReference>
<dbReference type="RefSeq" id="NP_173666.1">
    <property type="nucleotide sequence ID" value="NM_102099.2"/>
</dbReference>
<dbReference type="SMR" id="Q9SK92"/>
<dbReference type="BioGRID" id="24095">
    <property type="interactions" value="4"/>
</dbReference>
<dbReference type="IntAct" id="Q9SK92">
    <property type="interactions" value="4"/>
</dbReference>
<dbReference type="STRING" id="3702.Q9SK92"/>
<dbReference type="iPTMnet" id="Q9SK92"/>
<dbReference type="PaxDb" id="3702-AT1G22500.1"/>
<dbReference type="ProteomicsDB" id="246625"/>
<dbReference type="EnsemblPlants" id="AT1G22500.1">
    <property type="protein sequence ID" value="AT1G22500.1"/>
    <property type="gene ID" value="AT1G22500"/>
</dbReference>
<dbReference type="GeneID" id="838856"/>
<dbReference type="Gramene" id="AT1G22500.1">
    <property type="protein sequence ID" value="AT1G22500.1"/>
    <property type="gene ID" value="AT1G22500"/>
</dbReference>
<dbReference type="KEGG" id="ath:AT1G22500"/>
<dbReference type="Araport" id="AT1G22500"/>
<dbReference type="TAIR" id="AT1G22500">
    <property type="gene designation" value="ATL15"/>
</dbReference>
<dbReference type="eggNOG" id="KOG0800">
    <property type="taxonomic scope" value="Eukaryota"/>
</dbReference>
<dbReference type="HOGENOM" id="CLU_035191_1_0_1"/>
<dbReference type="InParanoid" id="Q9SK92"/>
<dbReference type="OMA" id="YHTRSIQ"/>
<dbReference type="OrthoDB" id="8062037at2759"/>
<dbReference type="PhylomeDB" id="Q9SK92"/>
<dbReference type="UniPathway" id="UPA00143"/>
<dbReference type="PRO" id="PR:Q9SK92"/>
<dbReference type="Proteomes" id="UP000006548">
    <property type="component" value="Chromosome 1"/>
</dbReference>
<dbReference type="ExpressionAtlas" id="Q9SK92">
    <property type="expression patterns" value="baseline and differential"/>
</dbReference>
<dbReference type="GO" id="GO:0016020">
    <property type="term" value="C:membrane"/>
    <property type="evidence" value="ECO:0007669"/>
    <property type="project" value="UniProtKB-SubCell"/>
</dbReference>
<dbReference type="GO" id="GO:0004842">
    <property type="term" value="F:ubiquitin-protein transferase activity"/>
    <property type="evidence" value="ECO:0000314"/>
    <property type="project" value="UniProtKB"/>
</dbReference>
<dbReference type="GO" id="GO:0008270">
    <property type="term" value="F:zinc ion binding"/>
    <property type="evidence" value="ECO:0007669"/>
    <property type="project" value="UniProtKB-KW"/>
</dbReference>
<dbReference type="GO" id="GO:0016567">
    <property type="term" value="P:protein ubiquitination"/>
    <property type="evidence" value="ECO:0000314"/>
    <property type="project" value="UniProtKB"/>
</dbReference>
<dbReference type="GO" id="GO:0033591">
    <property type="term" value="P:response to L-ascorbic acid"/>
    <property type="evidence" value="ECO:0000270"/>
    <property type="project" value="TAIR"/>
</dbReference>
<dbReference type="GO" id="GO:0009416">
    <property type="term" value="P:response to light stimulus"/>
    <property type="evidence" value="ECO:0000270"/>
    <property type="project" value="TAIR"/>
</dbReference>
<dbReference type="CDD" id="cd16461">
    <property type="entry name" value="RING-H2_EL5-like"/>
    <property type="match status" value="1"/>
</dbReference>
<dbReference type="FunFam" id="3.30.40.10:FF:000187">
    <property type="entry name" value="E3 ubiquitin-protein ligase ATL6"/>
    <property type="match status" value="1"/>
</dbReference>
<dbReference type="Gene3D" id="3.30.40.10">
    <property type="entry name" value="Zinc/RING finger domain, C3HC4 (zinc finger)"/>
    <property type="match status" value="1"/>
</dbReference>
<dbReference type="InterPro" id="IPR053238">
    <property type="entry name" value="RING-H2_zinc_finger"/>
</dbReference>
<dbReference type="InterPro" id="IPR001841">
    <property type="entry name" value="Znf_RING"/>
</dbReference>
<dbReference type="InterPro" id="IPR013083">
    <property type="entry name" value="Znf_RING/FYVE/PHD"/>
</dbReference>
<dbReference type="PANTHER" id="PTHR14155:SF506">
    <property type="entry name" value="E3 UBIQUITIN-PROTEIN LIGASE ATL15"/>
    <property type="match status" value="1"/>
</dbReference>
<dbReference type="PANTHER" id="PTHR14155">
    <property type="entry name" value="RING FINGER DOMAIN-CONTAINING"/>
    <property type="match status" value="1"/>
</dbReference>
<dbReference type="Pfam" id="PF13639">
    <property type="entry name" value="zf-RING_2"/>
    <property type="match status" value="1"/>
</dbReference>
<dbReference type="SMART" id="SM00184">
    <property type="entry name" value="RING"/>
    <property type="match status" value="1"/>
</dbReference>
<dbReference type="SUPFAM" id="SSF57850">
    <property type="entry name" value="RING/U-box"/>
    <property type="match status" value="1"/>
</dbReference>
<dbReference type="PROSITE" id="PS50089">
    <property type="entry name" value="ZF_RING_2"/>
    <property type="match status" value="1"/>
</dbReference>